<reference key="1">
    <citation type="journal article" date="1998" name="Nature">
        <title>The genome sequence of Rickettsia prowazekii and the origin of mitochondria.</title>
        <authorList>
            <person name="Andersson S.G.E."/>
            <person name="Zomorodipour A."/>
            <person name="Andersson J.O."/>
            <person name="Sicheritz-Ponten T."/>
            <person name="Alsmark U.C.M."/>
            <person name="Podowski R.M."/>
            <person name="Naeslund A.K."/>
            <person name="Eriksson A.-S."/>
            <person name="Winkler H.H."/>
            <person name="Kurland C.G."/>
        </authorList>
    </citation>
    <scope>NUCLEOTIDE SEQUENCE [LARGE SCALE GENOMIC DNA]</scope>
    <source>
        <strain>Madrid E</strain>
    </source>
</reference>
<dbReference type="EMBL" id="AJ235270">
    <property type="protein sequence ID" value="CAA14653.1"/>
    <property type="molecule type" value="Genomic_DNA"/>
</dbReference>
<dbReference type="PIR" id="F71729">
    <property type="entry name" value="F71729"/>
</dbReference>
<dbReference type="RefSeq" id="NP_220576.1">
    <property type="nucleotide sequence ID" value="NC_000963.1"/>
</dbReference>
<dbReference type="STRING" id="272947.gene:17555269"/>
<dbReference type="EnsemblBacteria" id="CAA14653">
    <property type="protein sequence ID" value="CAA14653"/>
    <property type="gene ID" value="CAA14653"/>
</dbReference>
<dbReference type="KEGG" id="rpr:RP187"/>
<dbReference type="PATRIC" id="fig|272947.5.peg.194"/>
<dbReference type="eggNOG" id="COG0265">
    <property type="taxonomic scope" value="Bacteria"/>
</dbReference>
<dbReference type="HOGENOM" id="CLU_1432182_0_0_5"/>
<dbReference type="OrthoDB" id="7160517at2"/>
<dbReference type="Proteomes" id="UP000002480">
    <property type="component" value="Chromosome"/>
</dbReference>
<sequence>MIKKLGGNLALFDREMDNFKGVTIKLTIFRDGKKLEQSVDLYDVNNNKIAKMINFGGAVFFESDDYFSNKSGIPLKALSVASVQAGSSFSSIPTFFNKDYKNVYRLQIFEMKDLALTNLDDLVKFLPVITKQKFITVRFRNYQPYYANFGYNELIASHNDMIADITLDSVDTKPYLLKYNTISHDWDMENIKLQ</sequence>
<organism>
    <name type="scientific">Rickettsia prowazekii (strain Madrid E)</name>
    <dbReference type="NCBI Taxonomy" id="272947"/>
    <lineage>
        <taxon>Bacteria</taxon>
        <taxon>Pseudomonadati</taxon>
        <taxon>Pseudomonadota</taxon>
        <taxon>Alphaproteobacteria</taxon>
        <taxon>Rickettsiales</taxon>
        <taxon>Rickettsiaceae</taxon>
        <taxon>Rickettsieae</taxon>
        <taxon>Rickettsia</taxon>
        <taxon>typhus group</taxon>
    </lineage>
</organism>
<feature type="chain" id="PRO_0000101327" description="Uncharacterized protein RP187">
    <location>
        <begin position="1"/>
        <end position="194"/>
    </location>
</feature>
<keyword id="KW-1185">Reference proteome</keyword>
<accession>Q9ZDX7</accession>
<gene>
    <name type="ordered locus">RP187</name>
</gene>
<proteinExistence type="predicted"/>
<name>Y187_RICPR</name>
<protein>
    <recommendedName>
        <fullName>Uncharacterized protein RP187</fullName>
    </recommendedName>
</protein>